<name>RR11_ILLOL</name>
<comment type="subunit">
    <text evidence="1">Part of the 30S ribosomal subunit.</text>
</comment>
<comment type="subcellular location">
    <subcellularLocation>
        <location>Plastid</location>
        <location>Chloroplast</location>
    </subcellularLocation>
</comment>
<comment type="similarity">
    <text evidence="1">Belongs to the universal ribosomal protein uS11 family.</text>
</comment>
<protein>
    <recommendedName>
        <fullName evidence="1">Small ribosomal subunit protein uS11c</fullName>
    </recommendedName>
    <alternativeName>
        <fullName evidence="2">30S ribosomal protein S11, chloroplastic</fullName>
    </alternativeName>
</protein>
<evidence type="ECO:0000255" key="1">
    <source>
        <dbReference type="HAMAP-Rule" id="MF_01310"/>
    </source>
</evidence>
<evidence type="ECO:0000305" key="2"/>
<keyword id="KW-0150">Chloroplast</keyword>
<keyword id="KW-0934">Plastid</keyword>
<keyword id="KW-0687">Ribonucleoprotein</keyword>
<keyword id="KW-0689">Ribosomal protein</keyword>
<keyword id="KW-0694">RNA-binding</keyword>
<keyword id="KW-0699">rRNA-binding</keyword>
<reference key="1">
    <citation type="journal article" date="2007" name="Mol. Phylogenet. Evol.">
        <title>Phylogenetic and evolutionary implications of complete chloroplast genome sequences of four early-diverging angiosperms: Buxus (Buxaceae), Chloranthus (Chloranthaceae), Dioscorea (Dioscoreaceae), and Illicium (Schisandraceae).</title>
        <authorList>
            <person name="Hansen D.R."/>
            <person name="Dastidar S.G."/>
            <person name="Cai Z."/>
            <person name="Penaflor C."/>
            <person name="Kuehl J.V."/>
            <person name="Boore J.L."/>
            <person name="Jansen R.K."/>
        </authorList>
    </citation>
    <scope>NUCLEOTIDE SEQUENCE [LARGE SCALE GENOMIC DNA]</scope>
</reference>
<gene>
    <name evidence="1" type="primary">rps11</name>
</gene>
<proteinExistence type="inferred from homology"/>
<sequence>MTKPIPRIGLRRNGRIGLRKNGRRISKGVIHVQASFNNTIVTVTDVRGRVVSWSSAGTCGFRGARRGTPFAAQTAAGNAIRTVVDQGMQRAEVMIKGPGLGRDAALRAIRRSGILLSFVRDVTPMPHNGCRPPKKRRV</sequence>
<geneLocation type="chloroplast"/>
<accession>A6MMX7</accession>
<organism>
    <name type="scientific">Illicium oligandrum</name>
    <name type="common">Star anise</name>
    <dbReference type="NCBI Taxonomy" id="145286"/>
    <lineage>
        <taxon>Eukaryota</taxon>
        <taxon>Viridiplantae</taxon>
        <taxon>Streptophyta</taxon>
        <taxon>Embryophyta</taxon>
        <taxon>Tracheophyta</taxon>
        <taxon>Spermatophyta</taxon>
        <taxon>Magnoliopsida</taxon>
        <taxon>Austrobaileyales</taxon>
        <taxon>Schisandraceae</taxon>
        <taxon>Illicium</taxon>
    </lineage>
</organism>
<feature type="chain" id="PRO_0000323366" description="Small ribosomal subunit protein uS11c">
    <location>
        <begin position="1"/>
        <end position="138"/>
    </location>
</feature>
<dbReference type="EMBL" id="EF380354">
    <property type="protein sequence ID" value="ABQ52551.1"/>
    <property type="molecule type" value="Genomic_DNA"/>
</dbReference>
<dbReference type="RefSeq" id="YP_001294303.1">
    <property type="nucleotide sequence ID" value="NC_009600.1"/>
</dbReference>
<dbReference type="SMR" id="A6MMX7"/>
<dbReference type="GeneID" id="5236757"/>
<dbReference type="GO" id="GO:0009507">
    <property type="term" value="C:chloroplast"/>
    <property type="evidence" value="ECO:0007669"/>
    <property type="project" value="UniProtKB-SubCell"/>
</dbReference>
<dbReference type="GO" id="GO:1990904">
    <property type="term" value="C:ribonucleoprotein complex"/>
    <property type="evidence" value="ECO:0007669"/>
    <property type="project" value="UniProtKB-KW"/>
</dbReference>
<dbReference type="GO" id="GO:0005840">
    <property type="term" value="C:ribosome"/>
    <property type="evidence" value="ECO:0007669"/>
    <property type="project" value="UniProtKB-KW"/>
</dbReference>
<dbReference type="GO" id="GO:0019843">
    <property type="term" value="F:rRNA binding"/>
    <property type="evidence" value="ECO:0007669"/>
    <property type="project" value="UniProtKB-UniRule"/>
</dbReference>
<dbReference type="GO" id="GO:0003735">
    <property type="term" value="F:structural constituent of ribosome"/>
    <property type="evidence" value="ECO:0007669"/>
    <property type="project" value="InterPro"/>
</dbReference>
<dbReference type="GO" id="GO:0006412">
    <property type="term" value="P:translation"/>
    <property type="evidence" value="ECO:0007669"/>
    <property type="project" value="UniProtKB-UniRule"/>
</dbReference>
<dbReference type="FunFam" id="3.30.420.80:FF:000003">
    <property type="entry name" value="30S ribosomal protein S11, chloroplastic"/>
    <property type="match status" value="1"/>
</dbReference>
<dbReference type="Gene3D" id="3.30.420.80">
    <property type="entry name" value="Ribosomal protein S11"/>
    <property type="match status" value="1"/>
</dbReference>
<dbReference type="HAMAP" id="MF_01310">
    <property type="entry name" value="Ribosomal_uS11"/>
    <property type="match status" value="1"/>
</dbReference>
<dbReference type="InterPro" id="IPR001971">
    <property type="entry name" value="Ribosomal_uS11"/>
</dbReference>
<dbReference type="InterPro" id="IPR019981">
    <property type="entry name" value="Ribosomal_uS11_bac-type"/>
</dbReference>
<dbReference type="InterPro" id="IPR018102">
    <property type="entry name" value="Ribosomal_uS11_CS"/>
</dbReference>
<dbReference type="InterPro" id="IPR036967">
    <property type="entry name" value="Ribosomal_uS11_sf"/>
</dbReference>
<dbReference type="NCBIfam" id="NF003698">
    <property type="entry name" value="PRK05309.1"/>
    <property type="match status" value="1"/>
</dbReference>
<dbReference type="NCBIfam" id="TIGR03632">
    <property type="entry name" value="uS11_bact"/>
    <property type="match status" value="1"/>
</dbReference>
<dbReference type="PANTHER" id="PTHR11759">
    <property type="entry name" value="40S RIBOSOMAL PROTEIN S14/30S RIBOSOMAL PROTEIN S11"/>
    <property type="match status" value="1"/>
</dbReference>
<dbReference type="Pfam" id="PF00411">
    <property type="entry name" value="Ribosomal_S11"/>
    <property type="match status" value="1"/>
</dbReference>
<dbReference type="PIRSF" id="PIRSF002131">
    <property type="entry name" value="Ribosomal_S11"/>
    <property type="match status" value="1"/>
</dbReference>
<dbReference type="SUPFAM" id="SSF53137">
    <property type="entry name" value="Translational machinery components"/>
    <property type="match status" value="1"/>
</dbReference>
<dbReference type="PROSITE" id="PS00054">
    <property type="entry name" value="RIBOSOMAL_S11"/>
    <property type="match status" value="1"/>
</dbReference>